<keyword id="KW-0042">Antenna complex</keyword>
<keyword id="KW-0472">Membrane</keyword>
<keyword id="KW-0602">Photosynthesis</keyword>
<keyword id="KW-0605">Phycobilisome</keyword>
<keyword id="KW-0793">Thylakoid</keyword>
<name>PYR5_PSETP</name>
<reference key="1">
    <citation type="submission" date="1992-08" db="EMBL/GenBank/DDBJ databases">
        <title>Organization and transcription of the genes encoding two differentially expressed phycocyanins in the cyanobacterium Pseudanabaena sp. PCC 7409.</title>
        <authorList>
            <person name="Dubbs J.M."/>
            <person name="Bryant D.A."/>
        </authorList>
    </citation>
    <scope>NUCLEOTIDE SEQUENCE [GENOMIC DNA]</scope>
</reference>
<proteinExistence type="inferred from homology"/>
<feature type="chain" id="PRO_0000199218" description="Phycobilisome 37.5 kDa linker polypeptide, phycocyanin-associated, rod">
    <location>
        <begin position="1"/>
        <end position="72" status="greater than"/>
    </location>
</feature>
<feature type="domain" description="PBS-linker" evidence="2">
    <location>
        <begin position="1"/>
        <end position="72"/>
    </location>
</feature>
<feature type="non-terminal residue">
    <location>
        <position position="72"/>
    </location>
</feature>
<gene>
    <name type="primary">cpcH2</name>
</gene>
<organism>
    <name type="scientific">Pseudanabaena tenuis (strain PCC 7409)</name>
    <dbReference type="NCBI Taxonomy" id="29415"/>
    <lineage>
        <taxon>Bacteria</taxon>
        <taxon>Bacillati</taxon>
        <taxon>Cyanobacteriota</taxon>
        <taxon>Cyanophyceae</taxon>
        <taxon>Pseudanabaenales</taxon>
        <taxon>Pseudanabaenaceae</taxon>
        <taxon>Pseudanabaena</taxon>
    </lineage>
</organism>
<dbReference type="EMBL" id="M99427">
    <property type="protein sequence ID" value="AAA26045.1"/>
    <property type="molecule type" value="Genomic_DNA"/>
</dbReference>
<dbReference type="SMR" id="Q52453"/>
<dbReference type="GO" id="GO:0030089">
    <property type="term" value="C:phycobilisome"/>
    <property type="evidence" value="ECO:0007669"/>
    <property type="project" value="UniProtKB-KW"/>
</dbReference>
<dbReference type="GO" id="GO:0031676">
    <property type="term" value="C:plasma membrane-derived thylakoid membrane"/>
    <property type="evidence" value="ECO:0007669"/>
    <property type="project" value="UniProtKB-SubCell"/>
</dbReference>
<dbReference type="GO" id="GO:0015979">
    <property type="term" value="P:photosynthesis"/>
    <property type="evidence" value="ECO:0007669"/>
    <property type="project" value="UniProtKB-KW"/>
</dbReference>
<dbReference type="Gene3D" id="1.10.3130.20">
    <property type="entry name" value="Phycobilisome linker domain"/>
    <property type="match status" value="1"/>
</dbReference>
<dbReference type="InterPro" id="IPR001297">
    <property type="entry name" value="PBS_linker_dom"/>
</dbReference>
<dbReference type="InterPro" id="IPR038255">
    <property type="entry name" value="PBS_linker_sf"/>
</dbReference>
<dbReference type="PANTHER" id="PTHR34011:SF6">
    <property type="entry name" value="PHYCOBILIPROTEIN APCE"/>
    <property type="match status" value="1"/>
</dbReference>
<dbReference type="PANTHER" id="PTHR34011">
    <property type="entry name" value="PHYCOBILISOME 32.1 KDA LINKER POLYPEPTIDE, PHYCOCYANIN-ASSOCIATED, ROD 2-RELATED"/>
    <property type="match status" value="1"/>
</dbReference>
<dbReference type="Pfam" id="PF00427">
    <property type="entry name" value="PBS_linker_poly"/>
    <property type="match status" value="1"/>
</dbReference>
<dbReference type="PROSITE" id="PS51445">
    <property type="entry name" value="PBS_LINKER"/>
    <property type="match status" value="1"/>
</dbReference>
<comment type="function">
    <text evidence="1">Rod linker protein, associated with phycocyanin. Linker polypeptides determine the state of aggregation and the location of the disk-shaped phycobiliprotein units within the phycobilisome and modulate their spectroscopic properties in order to mediate a directed and optimal energy transfer (By similarity).</text>
</comment>
<comment type="subcellular location">
    <subcellularLocation>
        <location evidence="1">Cellular thylakoid membrane</location>
        <topology evidence="1">Peripheral membrane protein</topology>
        <orientation evidence="1">Cytoplasmic side</orientation>
    </subcellularLocation>
    <text evidence="1">Associated with phycocyanin.</text>
</comment>
<comment type="similarity">
    <text evidence="2">Belongs to the phycobilisome linker protein family.</text>
</comment>
<sequence>MTSSAAAIRLGFEPFVNASPVELRTNWSDSDVQAVISATYRQVFGNEHLMLSERLTSAESLLASGNISVREF</sequence>
<protein>
    <recommendedName>
        <fullName>Phycobilisome 37.5 kDa linker polypeptide, phycocyanin-associated, rod</fullName>
        <shortName>L-37.5/R</shortName>
    </recommendedName>
</protein>
<evidence type="ECO:0000250" key="1"/>
<evidence type="ECO:0000255" key="2">
    <source>
        <dbReference type="PROSITE-ProRule" id="PRU00775"/>
    </source>
</evidence>
<accession>Q52453</accession>